<name>STPKL_ARATH</name>
<gene>
    <name type="ordered locus">At5g23170</name>
    <name type="ORF">MKD15.3</name>
</gene>
<feature type="chain" id="PRO_0000271405" description="Serine/threonine-protein kinase-like protein At5g23170">
    <location>
        <begin position="1"/>
        <end position="341"/>
    </location>
</feature>
<feature type="domain" description="Protein kinase" evidence="2">
    <location>
        <begin position="16"/>
        <end position="298"/>
    </location>
</feature>
<feature type="region of interest" description="Disordered" evidence="4">
    <location>
        <begin position="52"/>
        <end position="75"/>
    </location>
</feature>
<feature type="coiled-coil region" evidence="1">
    <location>
        <begin position="311"/>
        <end position="332"/>
    </location>
</feature>
<feature type="compositionally biased region" description="Low complexity" evidence="4">
    <location>
        <begin position="53"/>
        <end position="69"/>
    </location>
</feature>
<feature type="active site" description="Proton acceptor" evidence="2 3">
    <location>
        <position position="153"/>
    </location>
</feature>
<feature type="binding site" evidence="2">
    <location>
        <begin position="22"/>
        <end position="30"/>
    </location>
    <ligand>
        <name>ATP</name>
        <dbReference type="ChEBI" id="CHEBI:30616"/>
    </ligand>
</feature>
<feature type="binding site" evidence="2">
    <location>
        <position position="51"/>
    </location>
    <ligand>
        <name>ATP</name>
        <dbReference type="ChEBI" id="CHEBI:30616"/>
    </ligand>
</feature>
<feature type="sequence variant" description="In strain: cv. Bla-10, cv. Bl-0, cv. Can-0, cv. Cnt-1, cv. Cvi-0, cv. Di-G, cv. Ema-1, cv. Ka-0, cv. Kas-1, cv. Landsberg erecta, cv. Lip-0, cv. No-0, cv. Pa-1, cv. Petergof, cv. Sei-0, cv. Sorbo, cv. Tac-0 and cv. Tsu-0.">
    <original>V</original>
    <variation>D</variation>
    <location>
        <position position="40"/>
    </location>
</feature>
<feature type="sequence variant" description="In strain: cv. Bla-10, cv. Bl-0, cv. Can-0, cv. Cnt-1, cv. Cvi-0, cv. Di-G, cv. Ema-1, cv. Ka-0, cv. Kas-1, cv. Landsberg erecta, cv. Lip-0, cv. No-0, cv. Pa-1, cv. Petergof, cv. Sei-0, cv. Sorbo, cv. Tac-0 and cv. Tsu-0.">
    <original>Q</original>
    <variation>R</variation>
    <location>
        <position position="45"/>
    </location>
</feature>
<feature type="sequence variant" description="In strain: cv. Per-1, cv. Su-0 and cv. Yo-0.">
    <original>S</original>
    <variation>SSL</variation>
    <location>
        <position position="54"/>
    </location>
</feature>
<feature type="sequence variant" description="In strain: cv. Bla-10, cv. Bl-0, cv. Can-0, cv. Cnt-1, cv. Cvi-0, cv. Di-G, cv. Ema-1, cv. Ka-0, cv. Kas-1, cv. Landsberg erecta, cv. Lip-0, cv. No-0, cv. Pa-1, cv. Petergof, cv. Sei-0, cv. Sorbo, cv. Tac-0 and cv. Tsu-0.">
    <original>L</original>
    <variation>LSLSPS</variation>
    <location>
        <position position="56"/>
    </location>
</feature>
<feature type="sequence variant" description="In strain: cv. Bla-10, cv. Bl-0, cv. Can-0, cv. Cnt-1, cv. Cvi-0, cv. Di-G, cv. Ema-1, cv. Ka-0, cv. Kas-1, cv. Landsberg erecta, cv. Lip-0, cv. No-0, cv. Pa-1, cv. Petergof, cv. Sei-0, cv. Sorbo, cv. Tac-0 and cv. Tsu-0.">
    <original>D</original>
    <variation>N</variation>
    <location>
        <position position="80"/>
    </location>
</feature>
<feature type="sequence variant" description="In strain: cv. Bla-10, cv. Bl-0, cv. Can-0, cv. Cnt-1, cv. Cvi-0, cv. Di-G, cv. Ema-1, cv. Ka-0, cv. Kas-1, cv. Landsberg erecta, cv. Lip-0, cv. No-0, cv. Pa-1, cv. Petergof, cv. Sei-0, cv. Sorbo, cv. Tac-0 and cv. Tsu-0.">
    <original>V</original>
    <variation>I</variation>
    <location>
        <position position="104"/>
    </location>
</feature>
<feature type="sequence variant" description="In strain: cv. Bla-10, cv. Bl-0, cv. Can-0, cv. Cnt-1, cv. Cvi-0, cv. Di-G, cv. Ema-1, cv. Ka-0, cv. Kas-1, cv. Landsberg erecta, cv. Lip-0, cv. No-0, cv. Pa-1, cv. Petergof, cv. Sei-0, cv. Sorbo, cv. Tac-0 and cv. Tsu-0.">
    <original>E</original>
    <variation>G</variation>
    <location>
        <position position="111"/>
    </location>
</feature>
<feature type="sequence variant" description="In strain: cv. Bla-10, cv. Bl-0, cv. Cal-0, cv. Can-0, cv. Cnt-1, cv. Cvi-0, cv. Di-G, cv. Di-1, cv. Ema-1, cv. Ka-0, cv. Kas-1, cv. Landsberg erecta, cv. Lip-0, cv. No-0, cv. Pa-1, cv. Per-1, cv. Petergof, cv. Sei-0, cv. Sorbo, cv. Su-0, cv. Tac-0, cv. Tsu-0 and cv. Yo-0.">
    <original>Y</original>
    <variation>H</variation>
    <location>
        <position position="114"/>
    </location>
</feature>
<feature type="sequence variant" description="In strain: cv. Di-1.">
    <original>T</original>
    <variation>A</variation>
    <location>
        <position position="126"/>
    </location>
</feature>
<feature type="sequence variant" description="In strain: cv. Bl-0, cv. Cnt-1, cv. Ema-1, cv. Ka-0, cv. Kas-1, cv. No-0, cv. Sei-0 and cv. Tac-0.">
    <original>H</original>
    <variation>N</variation>
    <location>
        <position position="142"/>
    </location>
</feature>
<feature type="sequence variant" description="In strain: cv. Bla-10, cv. Bl-0, cv. Can-0, cv. Cnt-1, cv. Cvi-0, cv. Di-G, cv. Ema-1, cv. Ka-0, cv. Kas-1, cv. Landsberg erecta, cv. No-0, cv. Pa-1, cv. Petergof, cv. Sei-0, cv. Sorbo, cv. Tac-0 and cv. Tsu-0.">
    <original>HGI</original>
    <variation>QGV</variation>
    <location>
        <begin position="147"/>
        <end position="149"/>
    </location>
</feature>
<feature type="sequence variant" description="In strain: cv. Bla-10, cv. Bl-0, cv. Can-0, cv. Cnt-1, cv. Cvi-0, cv. Di-G, cv. Ema-1, cv. Ka-0, cv. Kas-1, cv. Landsberg erecta, cv. No-0, cv. Pa-1, cv. Petergof, cv. Sei-0, cv. Sorbo, cv. Tac-0 and cv. Tsu-0.">
    <original>D</original>
    <variation>E</variation>
    <location>
        <position position="177"/>
    </location>
</feature>
<feature type="sequence variant" description="In strain: cv. Sorbo.">
    <original>I</original>
    <variation>M</variation>
    <location>
        <position position="237"/>
    </location>
</feature>
<feature type="sequence variant" description="In strain: cv. Bla-10, cv. Bl-0, cv. Cnt-1, cv. Ema-1, cv. Ka-0, cv. Kas-1, cv. No-0, cv. Pa-1, cv. Sei-0 and cv. Tac-0.">
    <location>
        <position position="255"/>
    </location>
</feature>
<feature type="sequence variant" description="In strain: cv. Bla-10, cv. Bl-0, cv. Cnt-1, cv. Ema-1, cv. Ka-0, cv. Kas-1, cv. No-0, cv. Pa-1, cv. Sei-0 and cv. Tac-0.">
    <original>L</original>
    <variation>Q</variation>
    <location>
        <position position="269"/>
    </location>
</feature>
<feature type="sequence variant" description="In strain: cv. Can-0, cv. Cvi-0, cv. Di-G, cv. Landsberg erecta, cv. Lip-0, cv. Petergof, cv. Sorbo and cv. Tsu-0.">
    <original>V</original>
    <variation>M</variation>
    <location>
        <position position="297"/>
    </location>
</feature>
<feature type="sequence variant" description="In strain: cv. Can-0, cv. Cvi-0, cv. Di-G, cv. Landsberg erecta, cv. Lip-0, cv. Petergof, cv. Sorbo and cv. Tsu-0.">
    <original>A</original>
    <variation>E</variation>
    <location>
        <position position="301"/>
    </location>
</feature>
<sequence length="341" mass="38003">MKEFDYDKLVTAIDRFSPSKLIGKGSHGYVYKALLHHQDVDETRQRVVAIKTPSSLSPSSPSSSSSSKSEQTKKLENEIDVMSSLPYHPHVLSFLGHAEKKLMVVEYMPNESLYQLLHVSTDPLPTWLKRIEIALQIASAVHFLHEHGIIHRDIKSENILFDSNWEAKLADFGLAVDFGGDKKIRPAPAGTIGYLDPCYTLPENLSMKTDVYSYGVVLLEIVSCRKAIDVSRSPASIVDWAVPLIKEGRIGEICGGGGGGSGVFRGMSLRLLRMAARCVSSDVESRPCFGEITAEIVACLAEPLKSLPLWMSVLRRVVKLKRRKKRLRETLTWPGQTCRVW</sequence>
<organism>
    <name type="scientific">Arabidopsis thaliana</name>
    <name type="common">Mouse-ear cress</name>
    <dbReference type="NCBI Taxonomy" id="3702"/>
    <lineage>
        <taxon>Eukaryota</taxon>
        <taxon>Viridiplantae</taxon>
        <taxon>Streptophyta</taxon>
        <taxon>Embryophyta</taxon>
        <taxon>Tracheophyta</taxon>
        <taxon>Spermatophyta</taxon>
        <taxon>Magnoliopsida</taxon>
        <taxon>eudicotyledons</taxon>
        <taxon>Gunneridae</taxon>
        <taxon>Pentapetalae</taxon>
        <taxon>rosids</taxon>
        <taxon>malvids</taxon>
        <taxon>Brassicales</taxon>
        <taxon>Brassicaceae</taxon>
        <taxon>Camelineae</taxon>
        <taxon>Arabidopsis</taxon>
    </lineage>
</organism>
<evidence type="ECO:0000255" key="1"/>
<evidence type="ECO:0000255" key="2">
    <source>
        <dbReference type="PROSITE-ProRule" id="PRU00159"/>
    </source>
</evidence>
<evidence type="ECO:0000255" key="3">
    <source>
        <dbReference type="PROSITE-ProRule" id="PRU10027"/>
    </source>
</evidence>
<evidence type="ECO:0000256" key="4">
    <source>
        <dbReference type="SAM" id="MobiDB-lite"/>
    </source>
</evidence>
<evidence type="ECO:0000269" key="5">
    <source>
    </source>
</evidence>
<proteinExistence type="evidence at transcript level"/>
<accession>Q9FMY3</accession>
<accession>Q50IB8</accession>
<accession>Q50IC8</accession>
<accession>Q50ID4</accession>
<accession>Q50IE0</accession>
<accession>Q50IE8</accession>
<accession>Q50IF7</accession>
<accession>Q50IG2</accession>
<accession>Q50IG5</accession>
<protein>
    <recommendedName>
        <fullName>Serine/threonine-protein kinase-like protein At5g23170</fullName>
        <ecNumber>2.7.11.1</ecNumber>
    </recommendedName>
</protein>
<comment type="catalytic activity">
    <reaction>
        <text>L-seryl-[protein] + ATP = O-phospho-L-seryl-[protein] + ADP + H(+)</text>
        <dbReference type="Rhea" id="RHEA:17989"/>
        <dbReference type="Rhea" id="RHEA-COMP:9863"/>
        <dbReference type="Rhea" id="RHEA-COMP:11604"/>
        <dbReference type="ChEBI" id="CHEBI:15378"/>
        <dbReference type="ChEBI" id="CHEBI:29999"/>
        <dbReference type="ChEBI" id="CHEBI:30616"/>
        <dbReference type="ChEBI" id="CHEBI:83421"/>
        <dbReference type="ChEBI" id="CHEBI:456216"/>
        <dbReference type="EC" id="2.7.11.1"/>
    </reaction>
</comment>
<comment type="catalytic activity">
    <reaction>
        <text>L-threonyl-[protein] + ATP = O-phospho-L-threonyl-[protein] + ADP + H(+)</text>
        <dbReference type="Rhea" id="RHEA:46608"/>
        <dbReference type="Rhea" id="RHEA-COMP:11060"/>
        <dbReference type="Rhea" id="RHEA-COMP:11605"/>
        <dbReference type="ChEBI" id="CHEBI:15378"/>
        <dbReference type="ChEBI" id="CHEBI:30013"/>
        <dbReference type="ChEBI" id="CHEBI:30616"/>
        <dbReference type="ChEBI" id="CHEBI:61977"/>
        <dbReference type="ChEBI" id="CHEBI:456216"/>
        <dbReference type="EC" id="2.7.11.1"/>
    </reaction>
</comment>
<comment type="tissue specificity">
    <text evidence="5">Ubiquitous. Higher expression in mature stamina and pollen.</text>
</comment>
<comment type="miscellaneous">
    <text>This gene is linked with a growth rate QTL (quantitative trait locus).</text>
</comment>
<comment type="similarity">
    <text evidence="2">Belongs to the protein kinase superfamily. Ser/Thr protein kinase family.</text>
</comment>
<dbReference type="EC" id="2.7.11.1"/>
<dbReference type="EMBL" id="AB007648">
    <property type="protein sequence ID" value="BAB11172.1"/>
    <property type="molecule type" value="Genomic_DNA"/>
</dbReference>
<dbReference type="EMBL" id="CP002688">
    <property type="protein sequence ID" value="AED93129.1"/>
    <property type="molecule type" value="Genomic_DNA"/>
</dbReference>
<dbReference type="EMBL" id="AJ864997">
    <property type="protein sequence ID" value="CAI23745.1"/>
    <property type="molecule type" value="Genomic_DNA"/>
</dbReference>
<dbReference type="EMBL" id="AJ864994">
    <property type="protein sequence ID" value="CAI23739.1"/>
    <property type="molecule type" value="Genomic_DNA"/>
</dbReference>
<dbReference type="EMBL" id="AJ864992">
    <property type="protein sequence ID" value="CAI23737.1"/>
    <property type="molecule type" value="Genomic_DNA"/>
</dbReference>
<dbReference type="EMBL" id="AJ864991">
    <property type="protein sequence ID" value="CAI23735.1"/>
    <property type="molecule type" value="Genomic_DNA"/>
</dbReference>
<dbReference type="EMBL" id="AJ864983">
    <property type="protein sequence ID" value="CAI23717.1"/>
    <property type="molecule type" value="Genomic_DNA"/>
</dbReference>
<dbReference type="EMBL" id="AJ864976">
    <property type="protein sequence ID" value="CAI23703.1"/>
    <property type="molecule type" value="Genomic_DNA"/>
</dbReference>
<dbReference type="EMBL" id="AJ864969">
    <property type="protein sequence ID" value="CAI23691.1"/>
    <property type="molecule type" value="Genomic_DNA"/>
</dbReference>
<dbReference type="EMBL" id="AJ864968">
    <property type="protein sequence ID" value="CAI23689.1"/>
    <property type="molecule type" value="Genomic_DNA"/>
</dbReference>
<dbReference type="EMBL" id="AJ864980">
    <property type="protein sequence ID" value="CAI23711.1"/>
    <property type="molecule type" value="Genomic_DNA"/>
</dbReference>
<dbReference type="EMBL" id="AJ864984">
    <property type="protein sequence ID" value="CAI23720.1"/>
    <property type="molecule type" value="Genomic_DNA"/>
</dbReference>
<dbReference type="EMBL" id="AJ864973">
    <property type="protein sequence ID" value="CAI23697.1"/>
    <property type="molecule type" value="Genomic_DNA"/>
</dbReference>
<dbReference type="EMBL" id="AJ864996">
    <property type="protein sequence ID" value="CAI23743.1"/>
    <property type="molecule type" value="Genomic_DNA"/>
</dbReference>
<dbReference type="EMBL" id="AJ864972">
    <property type="protein sequence ID" value="CAI23695.1"/>
    <property type="molecule type" value="Genomic_DNA"/>
</dbReference>
<dbReference type="EMBL" id="AJ864990">
    <property type="protein sequence ID" value="CAI23733.1"/>
    <property type="molecule type" value="Genomic_DNA"/>
</dbReference>
<dbReference type="EMBL" id="AJ864971">
    <property type="protein sequence ID" value="CAI23693.1"/>
    <property type="molecule type" value="Genomic_DNA"/>
</dbReference>
<dbReference type="EMBL" id="AJ864989">
    <property type="protein sequence ID" value="CAI23731.1"/>
    <property type="molecule type" value="Genomic_DNA"/>
</dbReference>
<dbReference type="EMBL" id="AJ864985">
    <property type="protein sequence ID" value="CAI23723.1"/>
    <property type="molecule type" value="Genomic_DNA"/>
</dbReference>
<dbReference type="EMBL" id="AJ864982">
    <property type="protein sequence ID" value="CAI23715.1"/>
    <property type="molecule type" value="Genomic_DNA"/>
</dbReference>
<dbReference type="EMBL" id="AJ864981">
    <property type="protein sequence ID" value="CAI23713.1"/>
    <property type="molecule type" value="Genomic_DNA"/>
</dbReference>
<dbReference type="EMBL" id="AJ864970">
    <property type="protein sequence ID" value="CAI23749.1"/>
    <property type="molecule type" value="Genomic_DNA"/>
</dbReference>
<dbReference type="EMBL" id="AJ864987">
    <property type="protein sequence ID" value="CAI23727.1"/>
    <property type="molecule type" value="Genomic_DNA"/>
</dbReference>
<dbReference type="EMBL" id="AJ864995">
    <property type="protein sequence ID" value="CAI23741.1"/>
    <property type="molecule type" value="Genomic_DNA"/>
</dbReference>
<dbReference type="EMBL" id="AJ864979">
    <property type="protein sequence ID" value="CAI23709.1"/>
    <property type="molecule type" value="Genomic_DNA"/>
</dbReference>
<dbReference type="EMBL" id="AJ864975">
    <property type="protein sequence ID" value="CAI23701.1"/>
    <property type="molecule type" value="Genomic_DNA"/>
</dbReference>
<dbReference type="EMBL" id="AJ864998">
    <property type="protein sequence ID" value="CAI23747.1"/>
    <property type="molecule type" value="Genomic_DNA"/>
</dbReference>
<dbReference type="EMBL" id="AJ864993">
    <property type="protein sequence ID" value="CAI23751.1"/>
    <property type="molecule type" value="Genomic_DNA"/>
</dbReference>
<dbReference type="EMBL" id="AJ864988">
    <property type="protein sequence ID" value="CAI23729.1"/>
    <property type="molecule type" value="Genomic_DNA"/>
</dbReference>
<dbReference type="EMBL" id="AJ864986">
    <property type="protein sequence ID" value="CAI23725.1"/>
    <property type="molecule type" value="Genomic_DNA"/>
</dbReference>
<dbReference type="EMBL" id="AJ864978">
    <property type="protein sequence ID" value="CAI23707.1"/>
    <property type="molecule type" value="Genomic_DNA"/>
</dbReference>
<dbReference type="EMBL" id="AJ864977">
    <property type="protein sequence ID" value="CAI23705.1"/>
    <property type="molecule type" value="Genomic_DNA"/>
</dbReference>
<dbReference type="EMBL" id="AJ864974">
    <property type="protein sequence ID" value="CAI23699.1"/>
    <property type="molecule type" value="Genomic_DNA"/>
</dbReference>
<dbReference type="EMBL" id="BT005316">
    <property type="protein sequence ID" value="AAO63380.1"/>
    <property type="molecule type" value="mRNA"/>
</dbReference>
<dbReference type="EMBL" id="AK117152">
    <property type="protein sequence ID" value="BAC41830.1"/>
    <property type="molecule type" value="mRNA"/>
</dbReference>
<dbReference type="RefSeq" id="NP_197708.1">
    <property type="nucleotide sequence ID" value="NM_122223.4"/>
</dbReference>
<dbReference type="SMR" id="Q9FMY3"/>
<dbReference type="BioGRID" id="17656">
    <property type="interactions" value="1"/>
</dbReference>
<dbReference type="FunCoup" id="Q9FMY3">
    <property type="interactions" value="2"/>
</dbReference>
<dbReference type="IntAct" id="Q9FMY3">
    <property type="interactions" value="1"/>
</dbReference>
<dbReference type="STRING" id="3702.Q9FMY3"/>
<dbReference type="PaxDb" id="3702-AT5G23170.1"/>
<dbReference type="EnsemblPlants" id="AT5G23170.1">
    <property type="protein sequence ID" value="AT5G23170.1"/>
    <property type="gene ID" value="AT5G23170"/>
</dbReference>
<dbReference type="GeneID" id="832381"/>
<dbReference type="Gramene" id="AT5G23170.1">
    <property type="protein sequence ID" value="AT5G23170.1"/>
    <property type="gene ID" value="AT5G23170"/>
</dbReference>
<dbReference type="KEGG" id="ath:AT5G23170"/>
<dbReference type="Araport" id="AT5G23170"/>
<dbReference type="TAIR" id="AT5G23170"/>
<dbReference type="eggNOG" id="KOG1187">
    <property type="taxonomic scope" value="Eukaryota"/>
</dbReference>
<dbReference type="HOGENOM" id="CLU_000288_21_4_1"/>
<dbReference type="InParanoid" id="Q9FMY3"/>
<dbReference type="OMA" id="RCVSPKK"/>
<dbReference type="PhylomeDB" id="Q9FMY3"/>
<dbReference type="PRO" id="PR:Q9FMY3"/>
<dbReference type="Proteomes" id="UP000006548">
    <property type="component" value="Chromosome 5"/>
</dbReference>
<dbReference type="ExpressionAtlas" id="Q9FMY3">
    <property type="expression patterns" value="baseline and differential"/>
</dbReference>
<dbReference type="GO" id="GO:0005524">
    <property type="term" value="F:ATP binding"/>
    <property type="evidence" value="ECO:0007669"/>
    <property type="project" value="UniProtKB-KW"/>
</dbReference>
<dbReference type="GO" id="GO:0106310">
    <property type="term" value="F:protein serine kinase activity"/>
    <property type="evidence" value="ECO:0007669"/>
    <property type="project" value="RHEA"/>
</dbReference>
<dbReference type="GO" id="GO:0004674">
    <property type="term" value="F:protein serine/threonine kinase activity"/>
    <property type="evidence" value="ECO:0007669"/>
    <property type="project" value="UniProtKB-KW"/>
</dbReference>
<dbReference type="FunFam" id="1.10.510.10:FF:000809">
    <property type="entry name" value="Serine/threonine-protein kinase-like protein At5g23170"/>
    <property type="match status" value="1"/>
</dbReference>
<dbReference type="Gene3D" id="3.30.200.20">
    <property type="entry name" value="Phosphorylase Kinase, domain 1"/>
    <property type="match status" value="1"/>
</dbReference>
<dbReference type="Gene3D" id="1.10.510.10">
    <property type="entry name" value="Transferase(Phosphotransferase) domain 1"/>
    <property type="match status" value="1"/>
</dbReference>
<dbReference type="InterPro" id="IPR011009">
    <property type="entry name" value="Kinase-like_dom_sf"/>
</dbReference>
<dbReference type="InterPro" id="IPR000719">
    <property type="entry name" value="Prot_kinase_dom"/>
</dbReference>
<dbReference type="InterPro" id="IPR017441">
    <property type="entry name" value="Protein_kinase_ATP_BS"/>
</dbReference>
<dbReference type="InterPro" id="IPR008271">
    <property type="entry name" value="Ser/Thr_kinase_AS"/>
</dbReference>
<dbReference type="PANTHER" id="PTHR27001">
    <property type="entry name" value="OS01G0253100 PROTEIN"/>
    <property type="match status" value="1"/>
</dbReference>
<dbReference type="PANTHER" id="PTHR27001:SF850">
    <property type="entry name" value="OS01G0267800 PROTEIN"/>
    <property type="match status" value="1"/>
</dbReference>
<dbReference type="Pfam" id="PF00069">
    <property type="entry name" value="Pkinase"/>
    <property type="match status" value="1"/>
</dbReference>
<dbReference type="SMART" id="SM00220">
    <property type="entry name" value="S_TKc"/>
    <property type="match status" value="1"/>
</dbReference>
<dbReference type="SUPFAM" id="SSF56112">
    <property type="entry name" value="Protein kinase-like (PK-like)"/>
    <property type="match status" value="1"/>
</dbReference>
<dbReference type="PROSITE" id="PS00107">
    <property type="entry name" value="PROTEIN_KINASE_ATP"/>
    <property type="match status" value="1"/>
</dbReference>
<dbReference type="PROSITE" id="PS50011">
    <property type="entry name" value="PROTEIN_KINASE_DOM"/>
    <property type="match status" value="1"/>
</dbReference>
<dbReference type="PROSITE" id="PS00108">
    <property type="entry name" value="PROTEIN_KINASE_ST"/>
    <property type="match status" value="1"/>
</dbReference>
<reference key="1">
    <citation type="journal article" date="1997" name="DNA Res.">
        <title>Structural analysis of Arabidopsis thaliana chromosome 5. III. Sequence features of the regions of 1,191,918 bp covered by seventeen physically assigned P1 clones.</title>
        <authorList>
            <person name="Nakamura Y."/>
            <person name="Sato S."/>
            <person name="Kaneko T."/>
            <person name="Kotani H."/>
            <person name="Asamizu E."/>
            <person name="Miyajima N."/>
            <person name="Tabata S."/>
        </authorList>
    </citation>
    <scope>NUCLEOTIDE SEQUENCE [LARGE SCALE GENOMIC DNA]</scope>
    <source>
        <strain>cv. Columbia</strain>
    </source>
</reference>
<reference key="2">
    <citation type="journal article" date="2017" name="Plant J.">
        <title>Araport11: a complete reannotation of the Arabidopsis thaliana reference genome.</title>
        <authorList>
            <person name="Cheng C.Y."/>
            <person name="Krishnakumar V."/>
            <person name="Chan A.P."/>
            <person name="Thibaud-Nissen F."/>
            <person name="Schobel S."/>
            <person name="Town C.D."/>
        </authorList>
    </citation>
    <scope>GENOME REANNOTATION</scope>
    <source>
        <strain>cv. Columbia</strain>
    </source>
</reference>
<reference key="3">
    <citation type="journal article" date="2005" name="Nature">
        <title>Epistasis and balanced polymorphism influencing complex trait variation.</title>
        <authorList>
            <person name="Kroymann J."/>
            <person name="Mitchell-Olds T."/>
        </authorList>
    </citation>
    <scope>NUCLEOTIDE SEQUENCE [GENOMIC DNA]</scope>
    <scope>VARIANTS</scope>
    <scope>TISSUE SPECIFICITY</scope>
    <source>
        <strain>cv. Aa-0</strain>
        <strain>cv. Ag-0</strain>
        <strain>cv. Bl-0</strain>
        <strain>cv. Bla-10</strain>
        <strain>cv. Cal-0</strain>
        <strain>cv. Can-0</strain>
        <strain>cv. Cnt-1</strain>
        <strain>cv. Columbia</strain>
        <strain>cv. Cvi-0</strain>
        <strain>cv. Di-0</strain>
        <strain>cv. Di-1</strain>
        <strain>cv. Di-G</strain>
        <strain>cv. Ema-1</strain>
        <strain>cv. Ka-0</strain>
        <strain>cv. Kas-1</strain>
        <strain>cv. Landsberg erecta</strain>
        <strain>cv. Lip-0</strain>
        <strain>cv. Ma-0</strain>
        <strain>cv. Mt-0</strain>
        <strain>cv. No-0</strain>
        <strain>cv. Oy-0</strain>
        <strain>cv. Pa-1</strain>
        <strain>cv. Per-1</strain>
        <strain>cv. Petergof</strain>
        <strain>cv. Pi-0</strain>
        <strain>cv. Sei-0</strain>
        <strain>cv. Sorbo</strain>
        <strain>cv. Su-0</strain>
        <strain>cv. Tac-0</strain>
        <strain>cv. Tsu-0</strain>
        <strain>cv. Yo-0</strain>
    </source>
</reference>
<reference key="4">
    <citation type="journal article" date="2003" name="Science">
        <title>Empirical analysis of transcriptional activity in the Arabidopsis genome.</title>
        <authorList>
            <person name="Yamada K."/>
            <person name="Lim J."/>
            <person name="Dale J.M."/>
            <person name="Chen H."/>
            <person name="Shinn P."/>
            <person name="Palm C.J."/>
            <person name="Southwick A.M."/>
            <person name="Wu H.C."/>
            <person name="Kim C.J."/>
            <person name="Nguyen M."/>
            <person name="Pham P.K."/>
            <person name="Cheuk R.F."/>
            <person name="Karlin-Newmann G."/>
            <person name="Liu S.X."/>
            <person name="Lam B."/>
            <person name="Sakano H."/>
            <person name="Wu T."/>
            <person name="Yu G."/>
            <person name="Miranda M."/>
            <person name="Quach H.L."/>
            <person name="Tripp M."/>
            <person name="Chang C.H."/>
            <person name="Lee J.M."/>
            <person name="Toriumi M.J."/>
            <person name="Chan M.M."/>
            <person name="Tang C.C."/>
            <person name="Onodera C.S."/>
            <person name="Deng J.M."/>
            <person name="Akiyama K."/>
            <person name="Ansari Y."/>
            <person name="Arakawa T."/>
            <person name="Banh J."/>
            <person name="Banno F."/>
            <person name="Bowser L."/>
            <person name="Brooks S.Y."/>
            <person name="Carninci P."/>
            <person name="Chao Q."/>
            <person name="Choy N."/>
            <person name="Enju A."/>
            <person name="Goldsmith A.D."/>
            <person name="Gurjal M."/>
            <person name="Hansen N.F."/>
            <person name="Hayashizaki Y."/>
            <person name="Johnson-Hopson C."/>
            <person name="Hsuan V.W."/>
            <person name="Iida K."/>
            <person name="Karnes M."/>
            <person name="Khan S."/>
            <person name="Koesema E."/>
            <person name="Ishida J."/>
            <person name="Jiang P.X."/>
            <person name="Jones T."/>
            <person name="Kawai J."/>
            <person name="Kamiya A."/>
            <person name="Meyers C."/>
            <person name="Nakajima M."/>
            <person name="Narusaka M."/>
            <person name="Seki M."/>
            <person name="Sakurai T."/>
            <person name="Satou M."/>
            <person name="Tamse R."/>
            <person name="Vaysberg M."/>
            <person name="Wallender E.K."/>
            <person name="Wong C."/>
            <person name="Yamamura Y."/>
            <person name="Yuan S."/>
            <person name="Shinozaki K."/>
            <person name="Davis R.W."/>
            <person name="Theologis A."/>
            <person name="Ecker J.R."/>
        </authorList>
    </citation>
    <scope>NUCLEOTIDE SEQUENCE [LARGE SCALE MRNA]</scope>
    <source>
        <strain>cv. Columbia</strain>
    </source>
</reference>
<reference key="5">
    <citation type="journal article" date="2002" name="Science">
        <title>Functional annotation of a full-length Arabidopsis cDNA collection.</title>
        <authorList>
            <person name="Seki M."/>
            <person name="Narusaka M."/>
            <person name="Kamiya A."/>
            <person name="Ishida J."/>
            <person name="Satou M."/>
            <person name="Sakurai T."/>
            <person name="Nakajima M."/>
            <person name="Enju A."/>
            <person name="Akiyama K."/>
            <person name="Oono Y."/>
            <person name="Muramatsu M."/>
            <person name="Hayashizaki Y."/>
            <person name="Kawai J."/>
            <person name="Carninci P."/>
            <person name="Itoh M."/>
            <person name="Ishii Y."/>
            <person name="Arakawa T."/>
            <person name="Shibata K."/>
            <person name="Shinagawa A."/>
            <person name="Shinozaki K."/>
        </authorList>
    </citation>
    <scope>NUCLEOTIDE SEQUENCE [LARGE SCALE MRNA]</scope>
    <source>
        <strain>cv. Columbia</strain>
    </source>
</reference>
<reference key="6">
    <citation type="journal article" date="2009" name="Mol. Plant">
        <title>Diverse transcriptional programs associated with environmental stress and hormones in the Arabidopsis receptor-like kinase gene family.</title>
        <authorList>
            <person name="Chae L."/>
            <person name="Sudat S."/>
            <person name="Dudoit S."/>
            <person name="Zhu T."/>
            <person name="Luan S."/>
        </authorList>
    </citation>
    <scope>GENE FAMILY</scope>
</reference>
<keyword id="KW-0067">ATP-binding</keyword>
<keyword id="KW-0175">Coiled coil</keyword>
<keyword id="KW-0418">Kinase</keyword>
<keyword id="KW-0547">Nucleotide-binding</keyword>
<keyword id="KW-1185">Reference proteome</keyword>
<keyword id="KW-0723">Serine/threonine-protein kinase</keyword>
<keyword id="KW-0808">Transferase</keyword>